<keyword id="KW-0067">ATP-binding</keyword>
<keyword id="KW-0227">DNA damage</keyword>
<keyword id="KW-0234">DNA repair</keyword>
<keyword id="KW-0238">DNA-binding</keyword>
<keyword id="KW-0547">Nucleotide-binding</keyword>
<proteinExistence type="inferred from homology"/>
<protein>
    <recommendedName>
        <fullName evidence="1">DNA mismatch repair protein MutS</fullName>
    </recommendedName>
</protein>
<comment type="function">
    <text evidence="1">This protein is involved in the repair of mismatches in DNA. It is possible that it carries out the mismatch recognition step. This protein has a weak ATPase activity.</text>
</comment>
<comment type="similarity">
    <text evidence="1">Belongs to the DNA mismatch repair MutS family.</text>
</comment>
<gene>
    <name evidence="1" type="primary">mutS</name>
    <name type="ordered locus">Chy400_3199</name>
</gene>
<organism>
    <name type="scientific">Chloroflexus aurantiacus (strain ATCC 29364 / DSM 637 / Y-400-fl)</name>
    <dbReference type="NCBI Taxonomy" id="480224"/>
    <lineage>
        <taxon>Bacteria</taxon>
        <taxon>Bacillati</taxon>
        <taxon>Chloroflexota</taxon>
        <taxon>Chloroflexia</taxon>
        <taxon>Chloroflexales</taxon>
        <taxon>Chloroflexineae</taxon>
        <taxon>Chloroflexaceae</taxon>
        <taxon>Chloroflexus</taxon>
    </lineage>
</organism>
<accession>B9LB04</accession>
<name>MUTS_CHLSY</name>
<evidence type="ECO:0000255" key="1">
    <source>
        <dbReference type="HAMAP-Rule" id="MF_00096"/>
    </source>
</evidence>
<evidence type="ECO:0000256" key="2">
    <source>
        <dbReference type="SAM" id="MobiDB-lite"/>
    </source>
</evidence>
<feature type="chain" id="PRO_1000118676" description="DNA mismatch repair protein MutS">
    <location>
        <begin position="1"/>
        <end position="966"/>
    </location>
</feature>
<feature type="region of interest" description="Disordered" evidence="2">
    <location>
        <begin position="894"/>
        <end position="914"/>
    </location>
</feature>
<feature type="compositionally biased region" description="Pro residues" evidence="2">
    <location>
        <begin position="899"/>
        <end position="912"/>
    </location>
</feature>
<feature type="binding site" evidence="1">
    <location>
        <begin position="709"/>
        <end position="716"/>
    </location>
    <ligand>
        <name>ATP</name>
        <dbReference type="ChEBI" id="CHEBI:30616"/>
    </ligand>
</feature>
<sequence length="966" mass="107716">MATIELHAWYRQYRKLKEEAADAILLFRFGDFYETFDDDAKLIAELLDITLTRKEYAVDKRLPKDQQKLYAPMAGMPYHAVDRYVSELIARGYRVAIAEQLSETEAMRNDTRPRSVYAAGLTPVESSGKMVQRAIVRVITPGTVIDPAMLPDRTNNYLAAVIVEQGKVGLAYADLSTGEFAAAEFTDARALMQLQAELARLSPAEVLVPDDEALRLPNLEPVQARLSQDLAPLTKEEREALLPHERVARRLEGASAASWTQGYVTEWPLWRWELATTTEVLCEHLALPSLAVCGLDGRPLATRAAGALLQYAQVTQRQRVSQLRALRVYHTGAYMLLDPQTRRNLELLESGGRQGAKASLIAVLDRTCTAMGARLLRRWITQPLIVIEPLQVRQHAVARLVAETMARLEVRSALADLPDMERALNRIAQGITVATPRDMTQLRAALRKLPAVAQAVQALLPDLLAAEMPGEPPLVFDVCADVLDLLERALDDDPPALLGSSNYLRAAEEGGERPRRVIRPGFDQRLDALIRASRHAQEFIDRLESKERERTGIRSLKVGYNQVFGYYIEISRAVDAKLIPAHYERKQTLVNAERYVTEELKYYEGLLSDARLKLVDLERDIFQRLCDELQPHLDRLRATIAAVARIDALAALAEVAVRGRYVQPRLRTDRVLRIKQGRHPVVERTLSEPFIGNDIDLDGEQAQILIITGPNMAGKSTFLRQVALITLMAQIGSFVPADEAEIGLVDRIFTRIGAQDDIATGQSTFMVEMTETAALLMQSTPRSLIILDEVGRGTSTYDGMAIARAVVEYIHDHPRLGCRTLFATHYHELIALERELPRVRNYHMAAVERDGRVVFLHELRPGGADRSYGIHVAELAGIPPEVIRRASALLADLEGQRPPSSPAQPPAPPAPVVVPAQETGQGMQLSFFDLAPHPVVEYLRRLRIEELTPLEALNRLAELQRLAGQG</sequence>
<reference key="1">
    <citation type="submission" date="2009-01" db="EMBL/GenBank/DDBJ databases">
        <title>Complete sequence of Chloroflexus sp. Y-400-fl.</title>
        <authorList>
            <consortium name="US DOE Joint Genome Institute"/>
            <person name="Lucas S."/>
            <person name="Copeland A."/>
            <person name="Lapidus A."/>
            <person name="Glavina del Rio T."/>
            <person name="Dalin E."/>
            <person name="Tice H."/>
            <person name="Bruce D."/>
            <person name="Goodwin L."/>
            <person name="Pitluck S."/>
            <person name="Sims D."/>
            <person name="Kiss H."/>
            <person name="Brettin T."/>
            <person name="Detter J.C."/>
            <person name="Han C."/>
            <person name="Larimer F."/>
            <person name="Land M."/>
            <person name="Hauser L."/>
            <person name="Kyrpides N."/>
            <person name="Ovchinnikova G."/>
            <person name="Bryant D.A."/>
            <person name="Richardson P."/>
        </authorList>
    </citation>
    <scope>NUCLEOTIDE SEQUENCE [LARGE SCALE GENOMIC DNA]</scope>
    <source>
        <strain>ATCC 29364 / DSM 637 / Y-400-fl</strain>
    </source>
</reference>
<dbReference type="EMBL" id="CP001364">
    <property type="protein sequence ID" value="ACM54577.1"/>
    <property type="molecule type" value="Genomic_DNA"/>
</dbReference>
<dbReference type="SMR" id="B9LB04"/>
<dbReference type="KEGG" id="chl:Chy400_3199"/>
<dbReference type="HOGENOM" id="CLU_002472_3_0_0"/>
<dbReference type="OrthoDB" id="9802448at2"/>
<dbReference type="GO" id="GO:0005829">
    <property type="term" value="C:cytosol"/>
    <property type="evidence" value="ECO:0007669"/>
    <property type="project" value="TreeGrafter"/>
</dbReference>
<dbReference type="GO" id="GO:0005524">
    <property type="term" value="F:ATP binding"/>
    <property type="evidence" value="ECO:0007669"/>
    <property type="project" value="UniProtKB-UniRule"/>
</dbReference>
<dbReference type="GO" id="GO:0140664">
    <property type="term" value="F:ATP-dependent DNA damage sensor activity"/>
    <property type="evidence" value="ECO:0007669"/>
    <property type="project" value="InterPro"/>
</dbReference>
<dbReference type="GO" id="GO:0003684">
    <property type="term" value="F:damaged DNA binding"/>
    <property type="evidence" value="ECO:0007669"/>
    <property type="project" value="UniProtKB-UniRule"/>
</dbReference>
<dbReference type="GO" id="GO:0030983">
    <property type="term" value="F:mismatched DNA binding"/>
    <property type="evidence" value="ECO:0007669"/>
    <property type="project" value="InterPro"/>
</dbReference>
<dbReference type="GO" id="GO:0006298">
    <property type="term" value="P:mismatch repair"/>
    <property type="evidence" value="ECO:0007669"/>
    <property type="project" value="UniProtKB-UniRule"/>
</dbReference>
<dbReference type="CDD" id="cd03284">
    <property type="entry name" value="ABC_MutS1"/>
    <property type="match status" value="1"/>
</dbReference>
<dbReference type="FunFam" id="1.10.1420.10:FF:000001">
    <property type="entry name" value="DNA mismatch repair protein MutS"/>
    <property type="match status" value="1"/>
</dbReference>
<dbReference type="FunFam" id="1.10.1420.10:FF:000002">
    <property type="entry name" value="DNA mismatch repair protein MutS"/>
    <property type="match status" value="1"/>
</dbReference>
<dbReference type="FunFam" id="3.30.420.110:FF:000034">
    <property type="entry name" value="DNA mismatch repair protein MutS"/>
    <property type="match status" value="1"/>
</dbReference>
<dbReference type="FunFam" id="3.40.50.300:FF:001579">
    <property type="entry name" value="DNA mismatch repair protein MutS"/>
    <property type="match status" value="1"/>
</dbReference>
<dbReference type="Gene3D" id="1.10.1420.10">
    <property type="match status" value="2"/>
</dbReference>
<dbReference type="Gene3D" id="3.40.1170.10">
    <property type="entry name" value="DNA repair protein MutS, domain I"/>
    <property type="match status" value="1"/>
</dbReference>
<dbReference type="Gene3D" id="3.30.420.110">
    <property type="entry name" value="MutS, connector domain"/>
    <property type="match status" value="1"/>
</dbReference>
<dbReference type="Gene3D" id="3.40.50.300">
    <property type="entry name" value="P-loop containing nucleotide triphosphate hydrolases"/>
    <property type="match status" value="1"/>
</dbReference>
<dbReference type="HAMAP" id="MF_00096">
    <property type="entry name" value="MutS"/>
    <property type="match status" value="1"/>
</dbReference>
<dbReference type="InterPro" id="IPR005748">
    <property type="entry name" value="DNA_mismatch_repair_MutS"/>
</dbReference>
<dbReference type="InterPro" id="IPR007695">
    <property type="entry name" value="DNA_mismatch_repair_MutS-lik_N"/>
</dbReference>
<dbReference type="InterPro" id="IPR017261">
    <property type="entry name" value="DNA_mismatch_repair_MutS/MSH"/>
</dbReference>
<dbReference type="InterPro" id="IPR000432">
    <property type="entry name" value="DNA_mismatch_repair_MutS_C"/>
</dbReference>
<dbReference type="InterPro" id="IPR007861">
    <property type="entry name" value="DNA_mismatch_repair_MutS_clamp"/>
</dbReference>
<dbReference type="InterPro" id="IPR007696">
    <property type="entry name" value="DNA_mismatch_repair_MutS_core"/>
</dbReference>
<dbReference type="InterPro" id="IPR016151">
    <property type="entry name" value="DNA_mismatch_repair_MutS_N"/>
</dbReference>
<dbReference type="InterPro" id="IPR036187">
    <property type="entry name" value="DNA_mismatch_repair_MutS_sf"/>
</dbReference>
<dbReference type="InterPro" id="IPR007860">
    <property type="entry name" value="DNA_mmatch_repair_MutS_con_dom"/>
</dbReference>
<dbReference type="InterPro" id="IPR045076">
    <property type="entry name" value="MutS"/>
</dbReference>
<dbReference type="InterPro" id="IPR036678">
    <property type="entry name" value="MutS_con_dom_sf"/>
</dbReference>
<dbReference type="InterPro" id="IPR027417">
    <property type="entry name" value="P-loop_NTPase"/>
</dbReference>
<dbReference type="NCBIfam" id="TIGR01070">
    <property type="entry name" value="mutS1"/>
    <property type="match status" value="1"/>
</dbReference>
<dbReference type="NCBIfam" id="NF003810">
    <property type="entry name" value="PRK05399.1"/>
    <property type="match status" value="1"/>
</dbReference>
<dbReference type="PANTHER" id="PTHR11361:SF34">
    <property type="entry name" value="DNA MISMATCH REPAIR PROTEIN MSH1, MITOCHONDRIAL"/>
    <property type="match status" value="1"/>
</dbReference>
<dbReference type="PANTHER" id="PTHR11361">
    <property type="entry name" value="DNA MISMATCH REPAIR PROTEIN MUTS FAMILY MEMBER"/>
    <property type="match status" value="1"/>
</dbReference>
<dbReference type="Pfam" id="PF01624">
    <property type="entry name" value="MutS_I"/>
    <property type="match status" value="1"/>
</dbReference>
<dbReference type="Pfam" id="PF05188">
    <property type="entry name" value="MutS_II"/>
    <property type="match status" value="1"/>
</dbReference>
<dbReference type="Pfam" id="PF05192">
    <property type="entry name" value="MutS_III"/>
    <property type="match status" value="1"/>
</dbReference>
<dbReference type="Pfam" id="PF05190">
    <property type="entry name" value="MutS_IV"/>
    <property type="match status" value="1"/>
</dbReference>
<dbReference type="Pfam" id="PF00488">
    <property type="entry name" value="MutS_V"/>
    <property type="match status" value="1"/>
</dbReference>
<dbReference type="PIRSF" id="PIRSF037677">
    <property type="entry name" value="DNA_mis_repair_Msh6"/>
    <property type="match status" value="1"/>
</dbReference>
<dbReference type="SMART" id="SM00534">
    <property type="entry name" value="MUTSac"/>
    <property type="match status" value="1"/>
</dbReference>
<dbReference type="SMART" id="SM00533">
    <property type="entry name" value="MUTSd"/>
    <property type="match status" value="1"/>
</dbReference>
<dbReference type="SUPFAM" id="SSF55271">
    <property type="entry name" value="DNA repair protein MutS, domain I"/>
    <property type="match status" value="1"/>
</dbReference>
<dbReference type="SUPFAM" id="SSF53150">
    <property type="entry name" value="DNA repair protein MutS, domain II"/>
    <property type="match status" value="1"/>
</dbReference>
<dbReference type="SUPFAM" id="SSF48334">
    <property type="entry name" value="DNA repair protein MutS, domain III"/>
    <property type="match status" value="1"/>
</dbReference>
<dbReference type="SUPFAM" id="SSF52540">
    <property type="entry name" value="P-loop containing nucleoside triphosphate hydrolases"/>
    <property type="match status" value="1"/>
</dbReference>
<dbReference type="PROSITE" id="PS00486">
    <property type="entry name" value="DNA_MISMATCH_REPAIR_2"/>
    <property type="match status" value="1"/>
</dbReference>